<gene>
    <name type="ORF">SELMODRAFT_444075</name>
</gene>
<evidence type="ECO:0000250" key="1"/>
<evidence type="ECO:0000255" key="2"/>
<evidence type="ECO:0000256" key="3">
    <source>
        <dbReference type="SAM" id="MobiDB-lite"/>
    </source>
</evidence>
<evidence type="ECO:0000305" key="4"/>
<proteinExistence type="evidence at transcript level"/>
<comment type="subunit">
    <text evidence="1">Homodimer and heterodimers.</text>
</comment>
<comment type="subcellular location">
    <subcellularLocation>
        <location evidence="1">Cell membrane</location>
        <topology evidence="1">Multi-pass membrane protein</topology>
    </subcellularLocation>
</comment>
<comment type="similarity">
    <text evidence="4">Belongs to the Casparian strip membrane proteins (CASP) family.</text>
</comment>
<comment type="sequence caution" evidence="4">
    <conflict type="erroneous gene model prediction">
        <sequence resource="EMBL-CDS" id="EFJ20033"/>
    </conflict>
    <text>The predicted gene has been split into 2 genes.</text>
</comment>
<keyword id="KW-1003">Cell membrane</keyword>
<keyword id="KW-0472">Membrane</keyword>
<keyword id="KW-1185">Reference proteome</keyword>
<keyword id="KW-0812">Transmembrane</keyword>
<keyword id="KW-1133">Transmembrane helix</keyword>
<organism>
    <name type="scientific">Selaginella moellendorffii</name>
    <name type="common">Spikemoss</name>
    <dbReference type="NCBI Taxonomy" id="88036"/>
    <lineage>
        <taxon>Eukaryota</taxon>
        <taxon>Viridiplantae</taxon>
        <taxon>Streptophyta</taxon>
        <taxon>Embryophyta</taxon>
        <taxon>Tracheophyta</taxon>
        <taxon>Lycopodiopsida</taxon>
        <taxon>Selaginellales</taxon>
        <taxon>Selaginellaceae</taxon>
        <taxon>Selaginella</taxon>
    </lineage>
</organism>
<sequence length="221" mass="24033">MDSSSKPMNGSAGGSPVGDERKMGDHEHEFRISIILLRSFLLVLVIISEALMVTDRETGSVPLPFFGLPRPVFVTKTAKYELVTGLKFYVDALGVVIGYTVLHLLFNIGLVATKGTVVDCKSVAWISFIADSMMGYLLLSSAAVATEIGYLAEEGAPAVLWRKVCNAFGYFCTVYAISVVICFIAALVSFVVVGISAYHLFRLYGIQQQAAREKEKLSAEM</sequence>
<reference key="1">
    <citation type="journal article" date="2011" name="Science">
        <title>The Selaginella genome identifies genetic changes associated with the evolution of vascular plants.</title>
        <authorList>
            <person name="Banks J.A."/>
            <person name="Nishiyama T."/>
            <person name="Hasebe M."/>
            <person name="Bowman J.L."/>
            <person name="Gribskov M."/>
            <person name="dePamphilis C."/>
            <person name="Albert V.A."/>
            <person name="Aono N."/>
            <person name="Aoyama T."/>
            <person name="Ambrose B.A."/>
            <person name="Ashton N.W."/>
            <person name="Axtell M.J."/>
            <person name="Barker E."/>
            <person name="Barker M.S."/>
            <person name="Bennetzen J.L."/>
            <person name="Bonawitz N.D."/>
            <person name="Chapple C."/>
            <person name="Cheng C."/>
            <person name="Correa L.G."/>
            <person name="Dacre M."/>
            <person name="DeBarry J."/>
            <person name="Dreyer I."/>
            <person name="Elias M."/>
            <person name="Engstrom E.M."/>
            <person name="Estelle M."/>
            <person name="Feng L."/>
            <person name="Finet C."/>
            <person name="Floyd S.K."/>
            <person name="Frommer W.B."/>
            <person name="Fujita T."/>
            <person name="Gramzow L."/>
            <person name="Gutensohn M."/>
            <person name="Harholt J."/>
            <person name="Hattori M."/>
            <person name="Heyl A."/>
            <person name="Hirai T."/>
            <person name="Hiwatashi Y."/>
            <person name="Ishikawa M."/>
            <person name="Iwata M."/>
            <person name="Karol K.G."/>
            <person name="Koehler B."/>
            <person name="Kolukisaoglu U."/>
            <person name="Kubo M."/>
            <person name="Kurata T."/>
            <person name="Lalonde S."/>
            <person name="Li K."/>
            <person name="Li Y."/>
            <person name="Litt A."/>
            <person name="Lyons E."/>
            <person name="Manning G."/>
            <person name="Maruyama T."/>
            <person name="Michael T.P."/>
            <person name="Mikami K."/>
            <person name="Miyazaki S."/>
            <person name="Morinaga S."/>
            <person name="Murata T."/>
            <person name="Mueller-Roeber B."/>
            <person name="Nelson D.R."/>
            <person name="Obara M."/>
            <person name="Oguri Y."/>
            <person name="Olmstead R.G."/>
            <person name="Onodera N."/>
            <person name="Petersen B.L."/>
            <person name="Pils B."/>
            <person name="Prigge M."/>
            <person name="Rensing S.A."/>
            <person name="Riano-Pachon D.M."/>
            <person name="Roberts A.W."/>
            <person name="Sato Y."/>
            <person name="Scheller H.V."/>
            <person name="Schulz B."/>
            <person name="Schulz C."/>
            <person name="Shakirov E.V."/>
            <person name="Shibagaki N."/>
            <person name="Shinohara N."/>
            <person name="Shippen D.E."/>
            <person name="Soerensen I."/>
            <person name="Sotooka R."/>
            <person name="Sugimoto N."/>
            <person name="Sugita M."/>
            <person name="Sumikawa N."/>
            <person name="Tanurdzic M."/>
            <person name="Theissen G."/>
            <person name="Ulvskov P."/>
            <person name="Wakazuki S."/>
            <person name="Weng J.K."/>
            <person name="Willats W.W."/>
            <person name="Wipf D."/>
            <person name="Wolf P.G."/>
            <person name="Yang L."/>
            <person name="Zimmer A.D."/>
            <person name="Zhu Q."/>
            <person name="Mitros T."/>
            <person name="Hellsten U."/>
            <person name="Loque D."/>
            <person name="Otillar R."/>
            <person name="Salamov A."/>
            <person name="Schmutz J."/>
            <person name="Shapiro H."/>
            <person name="Lindquist E."/>
            <person name="Lucas S."/>
            <person name="Rokhsar D."/>
            <person name="Grigoriev I.V."/>
        </authorList>
    </citation>
    <scope>NUCLEOTIDE SEQUENCE [LARGE SCALE GENOMIC DNA]</scope>
</reference>
<reference key="2">
    <citation type="submission" date="2008-03" db="EMBL/GenBank/DDBJ databases">
        <title>DOE Joint Genome Institute Selaginella moellendorffii EST project.</title>
        <authorList>
            <person name="Richardson P."/>
            <person name="Lucas S."/>
            <person name="Rokhsar D."/>
            <person name="Wang M."/>
            <person name="Lindquist E.A."/>
        </authorList>
    </citation>
    <scope>NUCLEOTIDE SEQUENCE [LARGE SCALE MRNA] OF 4-221</scope>
</reference>
<reference key="3">
    <citation type="journal article" date="2014" name="Plant Physiol.">
        <title>Functional and evolutionary analysis of the CASPARIAN STRIP MEMBRANE DOMAIN PROTEIN family.</title>
        <authorList>
            <person name="Roppolo D."/>
            <person name="Boeckmann B."/>
            <person name="Pfister A."/>
            <person name="Boutet E."/>
            <person name="Rubio M.C."/>
            <person name="Denervaud-Tendon V."/>
            <person name="Vermeer J.E."/>
            <person name="Gheyselinck J."/>
            <person name="Xenarios I."/>
            <person name="Geldner N."/>
        </authorList>
    </citation>
    <scope>GENE FAMILY</scope>
    <scope>NOMENCLATURE</scope>
</reference>
<accession>P0DH61</accession>
<accession>D8S6A6</accession>
<name>CSPL6_SELML</name>
<feature type="chain" id="PRO_0000412053" description="CASP-like protein 2U10">
    <location>
        <begin position="1"/>
        <end position="221"/>
    </location>
</feature>
<feature type="topological domain" description="Cytoplasmic" evidence="2">
    <location>
        <begin position="1"/>
        <end position="31"/>
    </location>
</feature>
<feature type="transmembrane region" description="Helical" evidence="2">
    <location>
        <begin position="32"/>
        <end position="52"/>
    </location>
</feature>
<feature type="topological domain" description="Extracellular" evidence="2">
    <location>
        <begin position="53"/>
        <end position="91"/>
    </location>
</feature>
<feature type="transmembrane region" description="Helical" evidence="2">
    <location>
        <begin position="92"/>
        <end position="112"/>
    </location>
</feature>
<feature type="topological domain" description="Cytoplasmic" evidence="2">
    <location>
        <begin position="113"/>
        <end position="122"/>
    </location>
</feature>
<feature type="transmembrane region" description="Helical" evidence="2">
    <location>
        <begin position="123"/>
        <end position="143"/>
    </location>
</feature>
<feature type="topological domain" description="Extracellular" evidence="2">
    <location>
        <begin position="144"/>
        <end position="174"/>
    </location>
</feature>
<feature type="transmembrane region" description="Helical" evidence="2">
    <location>
        <begin position="175"/>
        <end position="195"/>
    </location>
</feature>
<feature type="topological domain" description="Cytoplasmic" evidence="2">
    <location>
        <begin position="196"/>
        <end position="221"/>
    </location>
</feature>
<feature type="region of interest" description="Disordered" evidence="3">
    <location>
        <begin position="1"/>
        <end position="22"/>
    </location>
</feature>
<feature type="sequence conflict" description="In Ref. 2; FE505089." evidence="4" ref="2">
    <original>P</original>
    <variation>A</variation>
    <location>
        <position position="7"/>
    </location>
</feature>
<feature type="sequence conflict" description="In Ref. 2; FE505089." evidence="4" ref="2">
    <original>E</original>
    <variation>D</variation>
    <location>
        <position position="20"/>
    </location>
</feature>
<feature type="sequence conflict" description="In Ref. 2; FE505089." evidence="4" ref="2">
    <original>S</original>
    <variation>G</variation>
    <location>
        <position position="141"/>
    </location>
</feature>
<dbReference type="EMBL" id="GL377604">
    <property type="protein sequence ID" value="EFJ20033.1"/>
    <property type="status" value="ALT_SEQ"/>
    <property type="molecule type" value="Genomic_DNA"/>
</dbReference>
<dbReference type="EMBL" id="FE505089">
    <property type="status" value="NOT_ANNOTATED_CDS"/>
    <property type="molecule type" value="mRNA"/>
</dbReference>
<dbReference type="SMR" id="P0DH61"/>
<dbReference type="HOGENOM" id="CLU_296197_0_0_1"/>
<dbReference type="InParanoid" id="P0DH61"/>
<dbReference type="OrthoDB" id="755577at2759"/>
<dbReference type="Proteomes" id="UP000001514">
    <property type="component" value="Unassembled WGS sequence"/>
</dbReference>
<dbReference type="GO" id="GO:0005886">
    <property type="term" value="C:plasma membrane"/>
    <property type="evidence" value="ECO:0007669"/>
    <property type="project" value="UniProtKB-SubCell"/>
</dbReference>
<dbReference type="InterPro" id="IPR006459">
    <property type="entry name" value="CASP/CASPL"/>
</dbReference>
<dbReference type="InterPro" id="IPR006702">
    <property type="entry name" value="CASP_dom"/>
</dbReference>
<dbReference type="NCBIfam" id="TIGR01569">
    <property type="entry name" value="A_tha_TIGR01569"/>
    <property type="match status" value="1"/>
</dbReference>
<dbReference type="PANTHER" id="PTHR33573:SF30">
    <property type="entry name" value="CASP-LIKE PROTEIN 2C1-RELATED"/>
    <property type="match status" value="1"/>
</dbReference>
<dbReference type="PANTHER" id="PTHR33573">
    <property type="entry name" value="CASP-LIKE PROTEIN 4A4"/>
    <property type="match status" value="1"/>
</dbReference>
<dbReference type="Pfam" id="PF04535">
    <property type="entry name" value="CASP_dom"/>
    <property type="match status" value="1"/>
</dbReference>
<protein>
    <recommendedName>
        <fullName>CASP-like protein 2U10</fullName>
        <shortName>SmCASPL2U10</shortName>
    </recommendedName>
</protein>